<feature type="chain" id="PRO_0000378054" description="B3 domain-containing protein Os03g0184500">
    <location>
        <begin position="1"/>
        <end position="237"/>
    </location>
</feature>
<feature type="DNA-binding region" description="TF-B3" evidence="1">
    <location>
        <begin position="137"/>
        <end position="228"/>
    </location>
</feature>
<accession>Q10QS9</accession>
<accession>A0A0P0VTZ5</accession>
<accession>Q94HG5</accession>
<evidence type="ECO:0000255" key="1">
    <source>
        <dbReference type="PROSITE-ProRule" id="PRU00326"/>
    </source>
</evidence>
<gene>
    <name type="ordered locus">Os03g0184500</name>
    <name type="ordered locus">LOC_Os03g08620</name>
    <name type="ORF">OsJ_09687</name>
    <name type="ORF">OSJNBa0032G08.2</name>
</gene>
<protein>
    <recommendedName>
        <fullName>B3 domain-containing protein Os03g0184500</fullName>
    </recommendedName>
</protein>
<name>Y3845_ORYSJ</name>
<dbReference type="EMBL" id="AC079633">
    <property type="protein sequence ID" value="AAK92622.1"/>
    <property type="molecule type" value="Genomic_DNA"/>
</dbReference>
<dbReference type="EMBL" id="DP000009">
    <property type="protein sequence ID" value="ABF94348.1"/>
    <property type="molecule type" value="Genomic_DNA"/>
</dbReference>
<dbReference type="EMBL" id="AP008209">
    <property type="protein sequence ID" value="BAF11104.1"/>
    <property type="molecule type" value="Genomic_DNA"/>
</dbReference>
<dbReference type="EMBL" id="AP014959">
    <property type="protein sequence ID" value="BAS82662.1"/>
    <property type="molecule type" value="Genomic_DNA"/>
</dbReference>
<dbReference type="EMBL" id="CM000140">
    <property type="protein sequence ID" value="EAZ25847.1"/>
    <property type="molecule type" value="Genomic_DNA"/>
</dbReference>
<dbReference type="EMBL" id="AK122017">
    <property type="protein sequence ID" value="BAH00755.1"/>
    <property type="molecule type" value="mRNA"/>
</dbReference>
<dbReference type="RefSeq" id="XP_015633231.1">
    <property type="nucleotide sequence ID" value="XM_015777745.1"/>
</dbReference>
<dbReference type="SMR" id="Q10QS9"/>
<dbReference type="FunCoup" id="Q10QS9">
    <property type="interactions" value="6"/>
</dbReference>
<dbReference type="PaxDb" id="39947-Q10QS9"/>
<dbReference type="EnsemblPlants" id="Os03t0184500-01">
    <property type="protein sequence ID" value="Os03t0184500-01"/>
    <property type="gene ID" value="Os03g0184500"/>
</dbReference>
<dbReference type="Gramene" id="Os03t0184500-01">
    <property type="protein sequence ID" value="Os03t0184500-01"/>
    <property type="gene ID" value="Os03g0184500"/>
</dbReference>
<dbReference type="KEGG" id="dosa:Os03g0184500"/>
<dbReference type="eggNOG" id="ENOG502QRAZ">
    <property type="taxonomic scope" value="Eukaryota"/>
</dbReference>
<dbReference type="HOGENOM" id="CLU_058918_1_0_1"/>
<dbReference type="InParanoid" id="Q10QS9"/>
<dbReference type="OMA" id="IASAACC"/>
<dbReference type="OrthoDB" id="1909330at2759"/>
<dbReference type="Proteomes" id="UP000000763">
    <property type="component" value="Chromosome 3"/>
</dbReference>
<dbReference type="Proteomes" id="UP000007752">
    <property type="component" value="Chromosome 3"/>
</dbReference>
<dbReference type="Proteomes" id="UP000059680">
    <property type="component" value="Chromosome 3"/>
</dbReference>
<dbReference type="GO" id="GO:0005634">
    <property type="term" value="C:nucleus"/>
    <property type="evidence" value="ECO:0007669"/>
    <property type="project" value="UniProtKB-SubCell"/>
</dbReference>
<dbReference type="GO" id="GO:0003677">
    <property type="term" value="F:DNA binding"/>
    <property type="evidence" value="ECO:0007669"/>
    <property type="project" value="UniProtKB-KW"/>
</dbReference>
<dbReference type="CDD" id="cd10017">
    <property type="entry name" value="B3_DNA"/>
    <property type="match status" value="1"/>
</dbReference>
<dbReference type="Gene3D" id="2.40.330.10">
    <property type="entry name" value="DNA-binding pseudobarrel domain"/>
    <property type="match status" value="1"/>
</dbReference>
<dbReference type="InterPro" id="IPR003340">
    <property type="entry name" value="B3_DNA-bd"/>
</dbReference>
<dbReference type="InterPro" id="IPR015300">
    <property type="entry name" value="DNA-bd_pseudobarrel_sf"/>
</dbReference>
<dbReference type="InterPro" id="IPR044837">
    <property type="entry name" value="REM16-like"/>
</dbReference>
<dbReference type="PANTHER" id="PTHR31391:SF4">
    <property type="entry name" value="B3 DOMAIN-CONTAINING PROTEIN OS03G0184500"/>
    <property type="match status" value="1"/>
</dbReference>
<dbReference type="PANTHER" id="PTHR31391">
    <property type="entry name" value="B3 DOMAIN-CONTAINING PROTEIN OS11G0197600-RELATED"/>
    <property type="match status" value="1"/>
</dbReference>
<dbReference type="Pfam" id="PF02362">
    <property type="entry name" value="B3"/>
    <property type="match status" value="1"/>
</dbReference>
<dbReference type="SMART" id="SM01019">
    <property type="entry name" value="B3"/>
    <property type="match status" value="1"/>
</dbReference>
<dbReference type="SUPFAM" id="SSF101936">
    <property type="entry name" value="DNA-binding pseudobarrel domain"/>
    <property type="match status" value="1"/>
</dbReference>
<dbReference type="PROSITE" id="PS50863">
    <property type="entry name" value="B3"/>
    <property type="match status" value="1"/>
</dbReference>
<sequence>MGMGMEKGMTAYEAARERTVEENKRKMEALNLRHLSAAIAVAPKTPSPMKQKRRRIIEAAVVAPSPPRRSRRLANLPEVKYAEVAPDGAERMKRSPRKAIDSIYLATRGSISMEARLEAARKAEELESQLDPEFPSFVKPMLHSHVVRGFWLGLPRHFCETYLPKHDAIVTLLDEKDEQFDTNYLAYKNGLSGGWAGFALDHGLLDGDATVFQLVKPTTFKVHIIRATVDDGNEVTK</sequence>
<organism>
    <name type="scientific">Oryza sativa subsp. japonica</name>
    <name type="common">Rice</name>
    <dbReference type="NCBI Taxonomy" id="39947"/>
    <lineage>
        <taxon>Eukaryota</taxon>
        <taxon>Viridiplantae</taxon>
        <taxon>Streptophyta</taxon>
        <taxon>Embryophyta</taxon>
        <taxon>Tracheophyta</taxon>
        <taxon>Spermatophyta</taxon>
        <taxon>Magnoliopsida</taxon>
        <taxon>Liliopsida</taxon>
        <taxon>Poales</taxon>
        <taxon>Poaceae</taxon>
        <taxon>BOP clade</taxon>
        <taxon>Oryzoideae</taxon>
        <taxon>Oryzeae</taxon>
        <taxon>Oryzinae</taxon>
        <taxon>Oryza</taxon>
        <taxon>Oryza sativa</taxon>
    </lineage>
</organism>
<keyword id="KW-0238">DNA-binding</keyword>
<keyword id="KW-0539">Nucleus</keyword>
<keyword id="KW-1185">Reference proteome</keyword>
<keyword id="KW-0804">Transcription</keyword>
<keyword id="KW-0805">Transcription regulation</keyword>
<proteinExistence type="evidence at transcript level"/>
<reference key="1">
    <citation type="journal article" date="2005" name="Genome Res.">
        <title>Sequence, annotation, and analysis of synteny between rice chromosome 3 and diverged grass species.</title>
        <authorList>
            <consortium name="The rice chromosome 3 sequencing consortium"/>
            <person name="Buell C.R."/>
            <person name="Yuan Q."/>
            <person name="Ouyang S."/>
            <person name="Liu J."/>
            <person name="Zhu W."/>
            <person name="Wang A."/>
            <person name="Maiti R."/>
            <person name="Haas B."/>
            <person name="Wortman J."/>
            <person name="Pertea M."/>
            <person name="Jones K.M."/>
            <person name="Kim M."/>
            <person name="Overton L."/>
            <person name="Tsitrin T."/>
            <person name="Fadrosh D."/>
            <person name="Bera J."/>
            <person name="Weaver B."/>
            <person name="Jin S."/>
            <person name="Johri S."/>
            <person name="Reardon M."/>
            <person name="Webb K."/>
            <person name="Hill J."/>
            <person name="Moffat K."/>
            <person name="Tallon L."/>
            <person name="Van Aken S."/>
            <person name="Lewis M."/>
            <person name="Utterback T."/>
            <person name="Feldblyum T."/>
            <person name="Zismann V."/>
            <person name="Iobst S."/>
            <person name="Hsiao J."/>
            <person name="de Vazeille A.R."/>
            <person name="Salzberg S.L."/>
            <person name="White O."/>
            <person name="Fraser C.M."/>
            <person name="Yu Y."/>
            <person name="Kim H."/>
            <person name="Rambo T."/>
            <person name="Currie J."/>
            <person name="Collura K."/>
            <person name="Kernodle-Thompson S."/>
            <person name="Wei F."/>
            <person name="Kudrna K."/>
            <person name="Ammiraju J.S.S."/>
            <person name="Luo M."/>
            <person name="Goicoechea J.L."/>
            <person name="Wing R.A."/>
            <person name="Henry D."/>
            <person name="Oates R."/>
            <person name="Palmer M."/>
            <person name="Pries G."/>
            <person name="Saski C."/>
            <person name="Simmons J."/>
            <person name="Soderlund C."/>
            <person name="Nelson W."/>
            <person name="de la Bastide M."/>
            <person name="Spiegel L."/>
            <person name="Nascimento L."/>
            <person name="Huang E."/>
            <person name="Preston R."/>
            <person name="Zutavern T."/>
            <person name="Palmer L."/>
            <person name="O'Shaughnessy A."/>
            <person name="Dike S."/>
            <person name="McCombie W.R."/>
            <person name="Minx P."/>
            <person name="Cordum H."/>
            <person name="Wilson R."/>
            <person name="Jin W."/>
            <person name="Lee H.R."/>
            <person name="Jiang J."/>
            <person name="Jackson S."/>
        </authorList>
    </citation>
    <scope>NUCLEOTIDE SEQUENCE [LARGE SCALE GENOMIC DNA]</scope>
    <source>
        <strain>cv. Nipponbare</strain>
    </source>
</reference>
<reference key="2">
    <citation type="journal article" date="2005" name="Nature">
        <title>The map-based sequence of the rice genome.</title>
        <authorList>
            <consortium name="International rice genome sequencing project (IRGSP)"/>
        </authorList>
    </citation>
    <scope>NUCLEOTIDE SEQUENCE [LARGE SCALE GENOMIC DNA]</scope>
    <source>
        <strain>cv. Nipponbare</strain>
    </source>
</reference>
<reference key="3">
    <citation type="journal article" date="2008" name="Nucleic Acids Res.">
        <title>The rice annotation project database (RAP-DB): 2008 update.</title>
        <authorList>
            <consortium name="The rice annotation project (RAP)"/>
        </authorList>
    </citation>
    <scope>GENOME REANNOTATION</scope>
    <source>
        <strain>cv. Nipponbare</strain>
    </source>
</reference>
<reference key="4">
    <citation type="journal article" date="2013" name="Rice">
        <title>Improvement of the Oryza sativa Nipponbare reference genome using next generation sequence and optical map data.</title>
        <authorList>
            <person name="Kawahara Y."/>
            <person name="de la Bastide M."/>
            <person name="Hamilton J.P."/>
            <person name="Kanamori H."/>
            <person name="McCombie W.R."/>
            <person name="Ouyang S."/>
            <person name="Schwartz D.C."/>
            <person name="Tanaka T."/>
            <person name="Wu J."/>
            <person name="Zhou S."/>
            <person name="Childs K.L."/>
            <person name="Davidson R.M."/>
            <person name="Lin H."/>
            <person name="Quesada-Ocampo L."/>
            <person name="Vaillancourt B."/>
            <person name="Sakai H."/>
            <person name="Lee S.S."/>
            <person name="Kim J."/>
            <person name="Numa H."/>
            <person name="Itoh T."/>
            <person name="Buell C.R."/>
            <person name="Matsumoto T."/>
        </authorList>
    </citation>
    <scope>GENOME REANNOTATION</scope>
    <source>
        <strain>cv. Nipponbare</strain>
    </source>
</reference>
<reference key="5">
    <citation type="journal article" date="2005" name="PLoS Biol.">
        <title>The genomes of Oryza sativa: a history of duplications.</title>
        <authorList>
            <person name="Yu J."/>
            <person name="Wang J."/>
            <person name="Lin W."/>
            <person name="Li S."/>
            <person name="Li H."/>
            <person name="Zhou J."/>
            <person name="Ni P."/>
            <person name="Dong W."/>
            <person name="Hu S."/>
            <person name="Zeng C."/>
            <person name="Zhang J."/>
            <person name="Zhang Y."/>
            <person name="Li R."/>
            <person name="Xu Z."/>
            <person name="Li S."/>
            <person name="Li X."/>
            <person name="Zheng H."/>
            <person name="Cong L."/>
            <person name="Lin L."/>
            <person name="Yin J."/>
            <person name="Geng J."/>
            <person name="Li G."/>
            <person name="Shi J."/>
            <person name="Liu J."/>
            <person name="Lv H."/>
            <person name="Li J."/>
            <person name="Wang J."/>
            <person name="Deng Y."/>
            <person name="Ran L."/>
            <person name="Shi X."/>
            <person name="Wang X."/>
            <person name="Wu Q."/>
            <person name="Li C."/>
            <person name="Ren X."/>
            <person name="Wang J."/>
            <person name="Wang X."/>
            <person name="Li D."/>
            <person name="Liu D."/>
            <person name="Zhang X."/>
            <person name="Ji Z."/>
            <person name="Zhao W."/>
            <person name="Sun Y."/>
            <person name="Zhang Z."/>
            <person name="Bao J."/>
            <person name="Han Y."/>
            <person name="Dong L."/>
            <person name="Ji J."/>
            <person name="Chen P."/>
            <person name="Wu S."/>
            <person name="Liu J."/>
            <person name="Xiao Y."/>
            <person name="Bu D."/>
            <person name="Tan J."/>
            <person name="Yang L."/>
            <person name="Ye C."/>
            <person name="Zhang J."/>
            <person name="Xu J."/>
            <person name="Zhou Y."/>
            <person name="Yu Y."/>
            <person name="Zhang B."/>
            <person name="Zhuang S."/>
            <person name="Wei H."/>
            <person name="Liu B."/>
            <person name="Lei M."/>
            <person name="Yu H."/>
            <person name="Li Y."/>
            <person name="Xu H."/>
            <person name="Wei S."/>
            <person name="He X."/>
            <person name="Fang L."/>
            <person name="Zhang Z."/>
            <person name="Zhang Y."/>
            <person name="Huang X."/>
            <person name="Su Z."/>
            <person name="Tong W."/>
            <person name="Li J."/>
            <person name="Tong Z."/>
            <person name="Li S."/>
            <person name="Ye J."/>
            <person name="Wang L."/>
            <person name="Fang L."/>
            <person name="Lei T."/>
            <person name="Chen C.-S."/>
            <person name="Chen H.-C."/>
            <person name="Xu Z."/>
            <person name="Li H."/>
            <person name="Huang H."/>
            <person name="Zhang F."/>
            <person name="Xu H."/>
            <person name="Li N."/>
            <person name="Zhao C."/>
            <person name="Li S."/>
            <person name="Dong L."/>
            <person name="Huang Y."/>
            <person name="Li L."/>
            <person name="Xi Y."/>
            <person name="Qi Q."/>
            <person name="Li W."/>
            <person name="Zhang B."/>
            <person name="Hu W."/>
            <person name="Zhang Y."/>
            <person name="Tian X."/>
            <person name="Jiao Y."/>
            <person name="Liang X."/>
            <person name="Jin J."/>
            <person name="Gao L."/>
            <person name="Zheng W."/>
            <person name="Hao B."/>
            <person name="Liu S.-M."/>
            <person name="Wang W."/>
            <person name="Yuan L."/>
            <person name="Cao M."/>
            <person name="McDermott J."/>
            <person name="Samudrala R."/>
            <person name="Wang J."/>
            <person name="Wong G.K.-S."/>
            <person name="Yang H."/>
        </authorList>
    </citation>
    <scope>NUCLEOTIDE SEQUENCE [LARGE SCALE GENOMIC DNA]</scope>
    <source>
        <strain>cv. Nipponbare</strain>
    </source>
</reference>
<reference key="6">
    <citation type="journal article" date="2003" name="Science">
        <title>Collection, mapping, and annotation of over 28,000 cDNA clones from japonica rice.</title>
        <authorList>
            <consortium name="The rice full-length cDNA consortium"/>
        </authorList>
    </citation>
    <scope>NUCLEOTIDE SEQUENCE [LARGE SCALE MRNA]</scope>
    <source>
        <strain>cv. Nipponbare</strain>
    </source>
</reference>
<comment type="subcellular location">
    <subcellularLocation>
        <location evidence="1">Nucleus</location>
    </subcellularLocation>
</comment>